<comment type="function">
    <text evidence="1 2">Acts as a negative regulator of cell migration, invasion, and metastasis downstream of p53/TP53, through inhibition of Arp2/3 complex-mediated actin polymerization (By similarity). Via its association with the multisubunit axonemal dynein complex, is potentially involved in the regulation of cilia function. May play a role in osteogenesis of dental tissue-derived mesenchymal stem cells (By similarity).</text>
</comment>
<comment type="subunit">
    <text evidence="1 2">Interacts with ACTR2; this interaction reduces binding of the Arp2/3 complex to the VCA domain of nucleation promoting factors (By similarity). Part of the multisubunit axonemal dynein complex formed at least of two heavy chains and a number of intermediate and light chains. Found in a associated with the catalytic heavy chain DNAH2, the intermediate chain DNAI4, and the light chain DYNLT1 (By similarity).</text>
</comment>
<comment type="subcellular location">
    <subcellularLocation>
        <location evidence="2">Cytoplasm</location>
    </subcellularLocation>
</comment>
<comment type="alternative products">
    <event type="alternative splicing"/>
    <isoform>
        <id>Q95JP0-1</id>
        <name>1</name>
        <sequence type="displayed"/>
    </isoform>
    <isoform>
        <id>Q95JP0-2</id>
        <name>2</name>
        <sequence type="described" ref="VSP_018081"/>
    </isoform>
</comment>
<protein>
    <recommendedName>
        <fullName>Dynein axonemal intermediate chain 3</fullName>
    </recommendedName>
    <alternativeName>
        <fullName>WD repeat-containing protein 63</fullName>
    </alternativeName>
</protein>
<gene>
    <name type="primary">DNAI3</name>
    <name type="synonym">WDR63</name>
    <name type="ORF">QtsA-1482</name>
    <name type="ORF">QtsA-17302</name>
</gene>
<proteinExistence type="evidence at transcript level"/>
<reference key="1">
    <citation type="journal article" date="2002" name="BMC Genomics">
        <title>Cynomolgus monkey testicular cDNAs for discovery of novel human genes in the human genome sequence.</title>
        <authorList>
            <person name="Osada N."/>
            <person name="Hida M."/>
            <person name="Kusuda J."/>
            <person name="Tanuma R."/>
            <person name="Hirata M."/>
            <person name="Suto Y."/>
            <person name="Hirai M."/>
            <person name="Terao K."/>
            <person name="Sugano S."/>
            <person name="Hashimoto K."/>
        </authorList>
    </citation>
    <scope>NUCLEOTIDE SEQUENCE [LARGE SCALE MRNA] (ISOFORM 1)</scope>
    <source>
        <tissue>Testis</tissue>
    </source>
</reference>
<reference key="2">
    <citation type="submission" date="2001-09" db="EMBL/GenBank/DDBJ databases">
        <title>Isolation of novel full-length cDNA clones from macaque testis cDNA libraries.</title>
        <authorList>
            <person name="Hashimoto K."/>
            <person name="Osada N."/>
            <person name="Hida M."/>
            <person name="Kusuda J."/>
            <person name="Tanuma R."/>
            <person name="Hirai M."/>
            <person name="Terao K."/>
            <person name="Sugano S."/>
        </authorList>
    </citation>
    <scope>NUCLEOTIDE SEQUENCE [LARGE SCALE MRNA] (ISOFORM 2)</scope>
    <source>
        <tissue>Testis</tissue>
    </source>
</reference>
<organism>
    <name type="scientific">Macaca fascicularis</name>
    <name type="common">Crab-eating macaque</name>
    <name type="synonym">Cynomolgus monkey</name>
    <dbReference type="NCBI Taxonomy" id="9541"/>
    <lineage>
        <taxon>Eukaryota</taxon>
        <taxon>Metazoa</taxon>
        <taxon>Chordata</taxon>
        <taxon>Craniata</taxon>
        <taxon>Vertebrata</taxon>
        <taxon>Euteleostomi</taxon>
        <taxon>Mammalia</taxon>
        <taxon>Eutheria</taxon>
        <taxon>Euarchontoglires</taxon>
        <taxon>Primates</taxon>
        <taxon>Haplorrhini</taxon>
        <taxon>Catarrhini</taxon>
        <taxon>Cercopithecidae</taxon>
        <taxon>Cercopithecinae</taxon>
        <taxon>Macaca</taxon>
    </lineage>
</organism>
<keyword id="KW-0025">Alternative splicing</keyword>
<keyword id="KW-0175">Coiled coil</keyword>
<keyword id="KW-0963">Cytoplasm</keyword>
<keyword id="KW-1185">Reference proteome</keyword>
<keyword id="KW-0677">Repeat</keyword>
<keyword id="KW-0853">WD repeat</keyword>
<sequence length="891" mass="102832">MAPKQKKKSSRRKKSPKPILAASEDMEPVNMESMGHPEIYPLVLTTKTQEIFNCRIDEDITDEQPYKLINKEDIFEDLRNRAAVSDFHPVKKIVQEYPGNELLLVYDKDFKYGLNFYLIGTEEGEENYLNPPEVSEEQEEYKEYIPEDVYIYKPPVSKPWVSLGSEKEIEEESVTESTKQITYMISRKRSEFGAPIKFSDQNASSVKDAYIECTAYPDKNFTLKQLEKDVGMQVIPQIKDISTQTKWTYPKNATTQYYPREFSEEEKETLKQSKPLVDFLNNASISVEIALQQNEITNTFIDDWKHLAEEEGTFGDKTDTHLKEYQSFTDLHSPTEKMITCVSWHPTIYGLIAVSVAVRLSFEDRVHFSGKLLLQPSLILFWSFSDPIHPQLMLESPDDIFCFKFCPSDPNIIAGGCINGQIVMWDITAHADRIENIKGGGSRSKKATLKPMFLLEPESNKEAMYIRHCAVSSIENGHKRVITDIHWLSDTFEINRMGSVFENRSGICCQLVTCSADCTICFWDIRPQKPLTPQTTEKKKEESIEIPFDVPSTFLHLDLSWKPLTKLKLSKGETSLDHCPTKISLNEDHLLCKTQDKMLAQSKTAKAEEMNPYHNLESGVANLLKPIDDFCTKFFVGTEEGEVIYTDWKMERDPETGRFMPKKPVNLHTIHDGIVHTIQRSPFYDDIILTVGGWNVAIWKESVMTGPLLQSCCAPKRYTSGHWSLTRPGVFYIGREDGYIDIWDLLEKTHEPAQSQNICITMITCIKPWIFSPKQQFIAIADYYGTLHILEIPWTLSHPSANEMASINHYFEREVKHLEYVEQRKKIREQEKKEMEQEMAKKKVKIYQKSKEQMEAELKMDYESYLELEKTVLINLGLIKVTEKGSYLDVM</sequence>
<name>DNAI3_MACFA</name>
<feature type="chain" id="PRO_0000233163" description="Dynein axonemal intermediate chain 3">
    <location>
        <begin position="1"/>
        <end position="891"/>
    </location>
</feature>
<feature type="repeat" description="WD 1" evidence="3">
    <location>
        <begin position="395"/>
        <end position="435"/>
    </location>
</feature>
<feature type="repeat" description="WD 2" evidence="3">
    <location>
        <begin position="477"/>
        <end position="533"/>
    </location>
</feature>
<feature type="repeat" description="WD 3" evidence="3">
    <location>
        <begin position="670"/>
        <end position="709"/>
    </location>
</feature>
<feature type="repeat" description="WD 4" evidence="3">
    <location>
        <begin position="713"/>
        <end position="753"/>
    </location>
</feature>
<feature type="region of interest" description="Disordered" evidence="4">
    <location>
        <begin position="1"/>
        <end position="27"/>
    </location>
</feature>
<feature type="coiled-coil region" evidence="3">
    <location>
        <begin position="817"/>
        <end position="861"/>
    </location>
</feature>
<feature type="compositionally biased region" description="Basic residues" evidence="4">
    <location>
        <begin position="1"/>
        <end position="16"/>
    </location>
</feature>
<feature type="splice variant" id="VSP_018081" description="In isoform 2." evidence="5">
    <location>
        <begin position="1"/>
        <end position="392"/>
    </location>
</feature>
<feature type="sequence conflict" description="In Ref. 2; BAB64476." evidence="6" ref="2">
    <original>H</original>
    <variation>R</variation>
    <location>
        <position position="798"/>
    </location>
</feature>
<feature type="sequence conflict" description="In Ref. 2; BAB64476." evidence="6" ref="2">
    <original>A</original>
    <variation>T</variation>
    <location>
        <position position="805"/>
    </location>
</feature>
<accession>Q95JP0</accession>
<accession>Q95LV8</accession>
<dbReference type="EMBL" id="AB070141">
    <property type="protein sequence ID" value="BAB63086.1"/>
    <property type="molecule type" value="mRNA"/>
</dbReference>
<dbReference type="EMBL" id="AB071082">
    <property type="protein sequence ID" value="BAB64476.1"/>
    <property type="molecule type" value="mRNA"/>
</dbReference>
<dbReference type="SMR" id="Q95JP0"/>
<dbReference type="STRING" id="9541.ENSMFAP00000010663"/>
<dbReference type="eggNOG" id="KOG1587">
    <property type="taxonomic scope" value="Eukaryota"/>
</dbReference>
<dbReference type="Proteomes" id="UP000233100">
    <property type="component" value="Unplaced"/>
</dbReference>
<dbReference type="GO" id="GO:0005858">
    <property type="term" value="C:axonemal dynein complex"/>
    <property type="evidence" value="ECO:0000250"/>
    <property type="project" value="UniProtKB"/>
</dbReference>
<dbReference type="GO" id="GO:0005737">
    <property type="term" value="C:cytoplasm"/>
    <property type="evidence" value="ECO:0000250"/>
    <property type="project" value="UniProtKB"/>
</dbReference>
<dbReference type="GO" id="GO:0036156">
    <property type="term" value="C:inner dynein arm"/>
    <property type="evidence" value="ECO:0007669"/>
    <property type="project" value="TreeGrafter"/>
</dbReference>
<dbReference type="GO" id="GO:0071933">
    <property type="term" value="F:Arp2/3 complex binding"/>
    <property type="evidence" value="ECO:0000250"/>
    <property type="project" value="UniProtKB"/>
</dbReference>
<dbReference type="GO" id="GO:0045504">
    <property type="term" value="F:dynein heavy chain binding"/>
    <property type="evidence" value="ECO:0007669"/>
    <property type="project" value="TreeGrafter"/>
</dbReference>
<dbReference type="GO" id="GO:0045503">
    <property type="term" value="F:dynein light chain binding"/>
    <property type="evidence" value="ECO:0007669"/>
    <property type="project" value="TreeGrafter"/>
</dbReference>
<dbReference type="GO" id="GO:0060294">
    <property type="term" value="P:cilium movement involved in cell motility"/>
    <property type="evidence" value="ECO:0007669"/>
    <property type="project" value="TreeGrafter"/>
</dbReference>
<dbReference type="GO" id="GO:0036159">
    <property type="term" value="P:inner dynein arm assembly"/>
    <property type="evidence" value="ECO:0007669"/>
    <property type="project" value="TreeGrafter"/>
</dbReference>
<dbReference type="GO" id="GO:0034316">
    <property type="term" value="P:negative regulation of Arp2/3 complex-mediated actin nucleation"/>
    <property type="evidence" value="ECO:0000250"/>
    <property type="project" value="UniProtKB"/>
</dbReference>
<dbReference type="GO" id="GO:0030336">
    <property type="term" value="P:negative regulation of cell migration"/>
    <property type="evidence" value="ECO:0000250"/>
    <property type="project" value="UniProtKB"/>
</dbReference>
<dbReference type="GO" id="GO:0045669">
    <property type="term" value="P:positive regulation of osteoblast differentiation"/>
    <property type="evidence" value="ECO:0000250"/>
    <property type="project" value="UniProtKB"/>
</dbReference>
<dbReference type="FunFam" id="2.130.10.10:FF:000415">
    <property type="entry name" value="WD repeat domain 63"/>
    <property type="match status" value="1"/>
</dbReference>
<dbReference type="Gene3D" id="2.130.10.10">
    <property type="entry name" value="YVTN repeat-like/Quinoprotein amine dehydrogenase"/>
    <property type="match status" value="2"/>
</dbReference>
<dbReference type="InterPro" id="IPR050687">
    <property type="entry name" value="Dynein_IC"/>
</dbReference>
<dbReference type="InterPro" id="IPR015943">
    <property type="entry name" value="WD40/YVTN_repeat-like_dom_sf"/>
</dbReference>
<dbReference type="InterPro" id="IPR036322">
    <property type="entry name" value="WD40_repeat_dom_sf"/>
</dbReference>
<dbReference type="InterPro" id="IPR001680">
    <property type="entry name" value="WD40_rpt"/>
</dbReference>
<dbReference type="PANTHER" id="PTHR12442:SF5">
    <property type="entry name" value="DYNEIN AXONEMAL INTERMEDIATE CHAIN 3"/>
    <property type="match status" value="1"/>
</dbReference>
<dbReference type="PANTHER" id="PTHR12442">
    <property type="entry name" value="DYNEIN INTERMEDIATE CHAIN"/>
    <property type="match status" value="1"/>
</dbReference>
<dbReference type="SMART" id="SM00320">
    <property type="entry name" value="WD40"/>
    <property type="match status" value="3"/>
</dbReference>
<dbReference type="SUPFAM" id="SSF50978">
    <property type="entry name" value="WD40 repeat-like"/>
    <property type="match status" value="1"/>
</dbReference>
<dbReference type="PROSITE" id="PS00678">
    <property type="entry name" value="WD_REPEATS_1"/>
    <property type="match status" value="2"/>
</dbReference>
<evidence type="ECO:0000250" key="1">
    <source>
        <dbReference type="UniProtKB" id="B2RY71"/>
    </source>
</evidence>
<evidence type="ECO:0000250" key="2">
    <source>
        <dbReference type="UniProtKB" id="Q8IWG1"/>
    </source>
</evidence>
<evidence type="ECO:0000255" key="3"/>
<evidence type="ECO:0000256" key="4">
    <source>
        <dbReference type="SAM" id="MobiDB-lite"/>
    </source>
</evidence>
<evidence type="ECO:0000303" key="5">
    <source ref="2"/>
</evidence>
<evidence type="ECO:0000305" key="6"/>